<comment type="function">
    <text>Capsid protein self-assembles to form rod-shaped virions about 18 nm in diameter with a central canal enclosing the viral genomic RNA.</text>
</comment>
<comment type="subcellular location">
    <subcellularLocation>
        <location evidence="2">Virion</location>
    </subcellularLocation>
</comment>
<comment type="similarity">
    <text evidence="2">Belongs to the virgaviridae capsid protein family.</text>
</comment>
<dbReference type="EMBL" id="X78966">
    <property type="protein sequence ID" value="CAA55560.1"/>
    <property type="molecule type" value="mRNA"/>
</dbReference>
<dbReference type="PIR" id="S59940">
    <property type="entry name" value="S55374"/>
</dbReference>
<dbReference type="SMR" id="Q84122"/>
<dbReference type="GO" id="GO:0019029">
    <property type="term" value="C:helical viral capsid"/>
    <property type="evidence" value="ECO:0007669"/>
    <property type="project" value="UniProtKB-KW"/>
</dbReference>
<dbReference type="GO" id="GO:0005198">
    <property type="term" value="F:structural molecule activity"/>
    <property type="evidence" value="ECO:0007669"/>
    <property type="project" value="InterPro"/>
</dbReference>
<dbReference type="Gene3D" id="1.20.120.70">
    <property type="entry name" value="Tobacco mosaic virus-like, coat protein"/>
    <property type="match status" value="1"/>
</dbReference>
<dbReference type="InterPro" id="IPR001337">
    <property type="entry name" value="TMV-like_coat"/>
</dbReference>
<dbReference type="InterPro" id="IPR036417">
    <property type="entry name" value="TMV-like_coat_sf"/>
</dbReference>
<dbReference type="Pfam" id="PF00721">
    <property type="entry name" value="TMV_coat"/>
    <property type="match status" value="1"/>
</dbReference>
<dbReference type="SUPFAM" id="SSF47195">
    <property type="entry name" value="TMV-like viral coat proteins"/>
    <property type="match status" value="1"/>
</dbReference>
<sequence length="158" mass="17769">MSYTITDPSKLAYLSSAWADPNSLINLCTNSLGNQFQTQQARTTVQQQFADVWQPVPTLTSRFPAGAGHFRVYRYEPILEPLITFLMGTFDTRNRIIEVRNPQNPTTTETLDATRRVDDATVAIRSAINNLLNELVRGNGMYNQVSFETMSGLTWTSS</sequence>
<reference key="1">
    <citation type="journal article" date="1995" name="Arch. Virol.">
        <title>Cloning of the 3'-terminal region encoding movement and coat proteins of a Korean isolate of odontoglossum ringspot virus.</title>
        <authorList>
            <person name="Ryu K.H."/>
            <person name="Choi C.W."/>
            <person name="Choi J.K."/>
            <person name="Park W.M."/>
        </authorList>
    </citation>
    <scope>NUCLEOTIDE SEQUENCE [MRNA]</scope>
</reference>
<protein>
    <recommendedName>
        <fullName>Capsid protein</fullName>
    </recommendedName>
    <alternativeName>
        <fullName>Coat protein</fullName>
    </alternativeName>
</protein>
<accession>Q84122</accession>
<name>CAPSD_ORSVC</name>
<keyword id="KW-0007">Acetylation</keyword>
<keyword id="KW-0167">Capsid protein</keyword>
<keyword id="KW-1139">Helical capsid protein</keyword>
<keyword id="KW-0946">Virion</keyword>
<organism>
    <name type="scientific">Odontoglossum ringspot virus (isolate Korean Cy)</name>
    <name type="common">ORSV-Cy</name>
    <dbReference type="NCBI Taxonomy" id="138661"/>
    <lineage>
        <taxon>Viruses</taxon>
        <taxon>Riboviria</taxon>
        <taxon>Orthornavirae</taxon>
        <taxon>Kitrinoviricota</taxon>
        <taxon>Alsuviricetes</taxon>
        <taxon>Martellivirales</taxon>
        <taxon>Virgaviridae</taxon>
        <taxon>Tobamovirus</taxon>
        <taxon>Odontoglossum ringspot virus</taxon>
    </lineage>
</organism>
<gene>
    <name type="primary">CP</name>
</gene>
<feature type="initiator methionine" description="Removed; by host" evidence="1">
    <location>
        <position position="1"/>
    </location>
</feature>
<feature type="chain" id="PRO_0000144931" description="Capsid protein">
    <location>
        <begin position="2"/>
        <end position="158"/>
    </location>
</feature>
<feature type="modified residue" description="N-acetylserine; by host" evidence="1">
    <location>
        <position position="2"/>
    </location>
</feature>
<organismHost>
    <name type="scientific">Cymbidium</name>
    <dbReference type="NCBI Taxonomy" id="14366"/>
</organismHost>
<organismHost>
    <name type="scientific">Odontoglossum</name>
    <dbReference type="NCBI Taxonomy" id="154697"/>
</organismHost>
<evidence type="ECO:0000250" key="1"/>
<evidence type="ECO:0000305" key="2"/>
<proteinExistence type="evidence at transcript level"/>